<feature type="chain" id="PRO_0000293232" description="Small ribosomal subunit protein uS4">
    <location>
        <begin position="1"/>
        <end position="210"/>
    </location>
</feature>
<feature type="domain" description="S4 RNA-binding" evidence="1">
    <location>
        <begin position="100"/>
        <end position="160"/>
    </location>
</feature>
<keyword id="KW-1185">Reference proteome</keyword>
<keyword id="KW-0687">Ribonucleoprotein</keyword>
<keyword id="KW-0689">Ribosomal protein</keyword>
<keyword id="KW-0694">RNA-binding</keyword>
<keyword id="KW-0699">rRNA-binding</keyword>
<evidence type="ECO:0000255" key="1">
    <source>
        <dbReference type="HAMAP-Rule" id="MF_01306"/>
    </source>
</evidence>
<evidence type="ECO:0000305" key="2"/>
<reference key="1">
    <citation type="journal article" date="2006" name="Nat. Biotechnol.">
        <title>Genome sequence of the ubiquitous hydrocarbon-degrading marine bacterium Alcanivorax borkumensis.</title>
        <authorList>
            <person name="Schneiker S."/>
            <person name="Martins dos Santos V.A.P."/>
            <person name="Bartels D."/>
            <person name="Bekel T."/>
            <person name="Brecht M."/>
            <person name="Buhrmester J."/>
            <person name="Chernikova T.N."/>
            <person name="Denaro R."/>
            <person name="Ferrer M."/>
            <person name="Gertler C."/>
            <person name="Goesmann A."/>
            <person name="Golyshina O.V."/>
            <person name="Kaminski F."/>
            <person name="Khachane A.N."/>
            <person name="Lang S."/>
            <person name="Linke B."/>
            <person name="McHardy A.C."/>
            <person name="Meyer F."/>
            <person name="Nechitaylo T."/>
            <person name="Puehler A."/>
            <person name="Regenhardt D."/>
            <person name="Rupp O."/>
            <person name="Sabirova J.S."/>
            <person name="Selbitschka W."/>
            <person name="Yakimov M.M."/>
            <person name="Timmis K.N."/>
            <person name="Vorhoelter F.-J."/>
            <person name="Weidner S."/>
            <person name="Kaiser O."/>
            <person name="Golyshin P.N."/>
        </authorList>
    </citation>
    <scope>NUCLEOTIDE SEQUENCE [LARGE SCALE GENOMIC DNA]</scope>
    <source>
        <strain>ATCC 700651 / DSM 11573 / NCIMB 13689 / SK2</strain>
    </source>
</reference>
<organism>
    <name type="scientific">Alcanivorax borkumensis (strain ATCC 700651 / DSM 11573 / NCIMB 13689 / SK2)</name>
    <dbReference type="NCBI Taxonomy" id="393595"/>
    <lineage>
        <taxon>Bacteria</taxon>
        <taxon>Pseudomonadati</taxon>
        <taxon>Pseudomonadota</taxon>
        <taxon>Gammaproteobacteria</taxon>
        <taxon>Oceanospirillales</taxon>
        <taxon>Alcanivoracaceae</taxon>
        <taxon>Alcanivorax</taxon>
    </lineage>
</organism>
<protein>
    <recommendedName>
        <fullName evidence="1">Small ribosomal subunit protein uS4</fullName>
    </recommendedName>
    <alternativeName>
        <fullName evidence="2">30S ribosomal protein S4</fullName>
    </alternativeName>
</protein>
<accession>Q0VSH9</accession>
<gene>
    <name evidence="1" type="primary">rpsD</name>
    <name type="ordered locus">ABO_0421</name>
</gene>
<comment type="function">
    <text evidence="1">One of the primary rRNA binding proteins, it binds directly to 16S rRNA where it nucleates assembly of the body of the 30S subunit.</text>
</comment>
<comment type="function">
    <text evidence="1">With S5 and S12 plays an important role in translational accuracy.</text>
</comment>
<comment type="subunit">
    <text evidence="1">Part of the 30S ribosomal subunit. Contacts protein S5. The interaction surface between S4 and S5 is involved in control of translational fidelity.</text>
</comment>
<comment type="similarity">
    <text evidence="1">Belongs to the universal ribosomal protein uS4 family.</text>
</comment>
<proteinExistence type="inferred from homology"/>
<dbReference type="EMBL" id="AM286690">
    <property type="protein sequence ID" value="CAL15869.1"/>
    <property type="molecule type" value="Genomic_DNA"/>
</dbReference>
<dbReference type="RefSeq" id="WP_011587707.1">
    <property type="nucleotide sequence ID" value="NC_008260.1"/>
</dbReference>
<dbReference type="SMR" id="Q0VSH9"/>
<dbReference type="STRING" id="393595.ABO_0421"/>
<dbReference type="KEGG" id="abo:ABO_0421"/>
<dbReference type="eggNOG" id="COG0522">
    <property type="taxonomic scope" value="Bacteria"/>
</dbReference>
<dbReference type="HOGENOM" id="CLU_092403_0_2_6"/>
<dbReference type="OrthoDB" id="9803672at2"/>
<dbReference type="Proteomes" id="UP000008871">
    <property type="component" value="Chromosome"/>
</dbReference>
<dbReference type="GO" id="GO:0015935">
    <property type="term" value="C:small ribosomal subunit"/>
    <property type="evidence" value="ECO:0007669"/>
    <property type="project" value="InterPro"/>
</dbReference>
<dbReference type="GO" id="GO:0019843">
    <property type="term" value="F:rRNA binding"/>
    <property type="evidence" value="ECO:0007669"/>
    <property type="project" value="UniProtKB-UniRule"/>
</dbReference>
<dbReference type="GO" id="GO:0003735">
    <property type="term" value="F:structural constituent of ribosome"/>
    <property type="evidence" value="ECO:0007669"/>
    <property type="project" value="InterPro"/>
</dbReference>
<dbReference type="GO" id="GO:0042274">
    <property type="term" value="P:ribosomal small subunit biogenesis"/>
    <property type="evidence" value="ECO:0007669"/>
    <property type="project" value="TreeGrafter"/>
</dbReference>
<dbReference type="GO" id="GO:0006412">
    <property type="term" value="P:translation"/>
    <property type="evidence" value="ECO:0007669"/>
    <property type="project" value="UniProtKB-UniRule"/>
</dbReference>
<dbReference type="CDD" id="cd00165">
    <property type="entry name" value="S4"/>
    <property type="match status" value="1"/>
</dbReference>
<dbReference type="FunFam" id="1.10.1050.10:FF:000001">
    <property type="entry name" value="30S ribosomal protein S4"/>
    <property type="match status" value="1"/>
</dbReference>
<dbReference type="FunFam" id="3.10.290.10:FF:000001">
    <property type="entry name" value="30S ribosomal protein S4"/>
    <property type="match status" value="1"/>
</dbReference>
<dbReference type="Gene3D" id="1.10.1050.10">
    <property type="entry name" value="Ribosomal Protein S4 Delta 41, Chain A, domain 1"/>
    <property type="match status" value="1"/>
</dbReference>
<dbReference type="Gene3D" id="3.10.290.10">
    <property type="entry name" value="RNA-binding S4 domain"/>
    <property type="match status" value="1"/>
</dbReference>
<dbReference type="HAMAP" id="MF_01306_B">
    <property type="entry name" value="Ribosomal_uS4_B"/>
    <property type="match status" value="1"/>
</dbReference>
<dbReference type="InterPro" id="IPR022801">
    <property type="entry name" value="Ribosomal_uS4"/>
</dbReference>
<dbReference type="InterPro" id="IPR005709">
    <property type="entry name" value="Ribosomal_uS4_bac-type"/>
</dbReference>
<dbReference type="InterPro" id="IPR018079">
    <property type="entry name" value="Ribosomal_uS4_CS"/>
</dbReference>
<dbReference type="InterPro" id="IPR001912">
    <property type="entry name" value="Ribosomal_uS4_N"/>
</dbReference>
<dbReference type="InterPro" id="IPR002942">
    <property type="entry name" value="S4_RNA-bd"/>
</dbReference>
<dbReference type="InterPro" id="IPR036986">
    <property type="entry name" value="S4_RNA-bd_sf"/>
</dbReference>
<dbReference type="NCBIfam" id="NF003717">
    <property type="entry name" value="PRK05327.1"/>
    <property type="match status" value="1"/>
</dbReference>
<dbReference type="NCBIfam" id="TIGR01017">
    <property type="entry name" value="rpsD_bact"/>
    <property type="match status" value="1"/>
</dbReference>
<dbReference type="PANTHER" id="PTHR11831">
    <property type="entry name" value="30S 40S RIBOSOMAL PROTEIN"/>
    <property type="match status" value="1"/>
</dbReference>
<dbReference type="PANTHER" id="PTHR11831:SF4">
    <property type="entry name" value="SMALL RIBOSOMAL SUBUNIT PROTEIN US4M"/>
    <property type="match status" value="1"/>
</dbReference>
<dbReference type="Pfam" id="PF00163">
    <property type="entry name" value="Ribosomal_S4"/>
    <property type="match status" value="1"/>
</dbReference>
<dbReference type="Pfam" id="PF01479">
    <property type="entry name" value="S4"/>
    <property type="match status" value="1"/>
</dbReference>
<dbReference type="SMART" id="SM01390">
    <property type="entry name" value="Ribosomal_S4"/>
    <property type="match status" value="1"/>
</dbReference>
<dbReference type="SMART" id="SM00363">
    <property type="entry name" value="S4"/>
    <property type="match status" value="1"/>
</dbReference>
<dbReference type="SUPFAM" id="SSF55174">
    <property type="entry name" value="Alpha-L RNA-binding motif"/>
    <property type="match status" value="1"/>
</dbReference>
<dbReference type="PROSITE" id="PS00632">
    <property type="entry name" value="RIBOSOMAL_S4"/>
    <property type="match status" value="1"/>
</dbReference>
<dbReference type="PROSITE" id="PS50889">
    <property type="entry name" value="S4"/>
    <property type="match status" value="1"/>
</dbReference>
<name>RS4_ALCBS</name>
<sequence length="210" mass="23659">MARYIGPKCKLSRREGTDLFLKSGIRPLESKCKADQAPGQAAGASGRRPARLSDYGVQLREKQKVRRTYGVLEKQFRSYYKKAAASKGATGEVLLQLLEGRLDNVVYRMGFGSTRSEARQLVSHRAILVNGQSVNVASYQVKPGDQINVREKSKNQLRVKNAMELAQQRGFMPWIEVDDKKLEGTYKAKPERIDLPAEINENLIVELYSK</sequence>